<feature type="chain" id="PRO_1000147365" description="Nucleotide-binding protein MLBr00563">
    <location>
        <begin position="1"/>
        <end position="298"/>
    </location>
</feature>
<feature type="binding site" evidence="1">
    <location>
        <begin position="21"/>
        <end position="28"/>
    </location>
    <ligand>
        <name>ATP</name>
        <dbReference type="ChEBI" id="CHEBI:30616"/>
    </ligand>
</feature>
<feature type="binding site" evidence="1">
    <location>
        <begin position="72"/>
        <end position="75"/>
    </location>
    <ligand>
        <name>GTP</name>
        <dbReference type="ChEBI" id="CHEBI:37565"/>
    </ligand>
</feature>
<sequence length="298" mass="32607">MSGNNHPGDASAEIDVVLVTGLSGAGRGTAAKVLEDLGWYVADNLPPQLITWMVDFGLAAGSRITQLAVVMDVRSRGFTGDLDSVRRELATRNIIPRVVFMEASDDMLVRRYEQNRRSHPLQGEQTLAEGIAAERRMLAPVRATADLIIDTSALSVPGLRESIERAFGGDASATTSVTVESFGFKYGLPMDADIVMDVRFLPNPHWVDELRSLTGQHSAVRDYVLGQPGAAEFLRTYRRLLSLVVDGYRREGKRYMTVAIGCTGGKHRSVAIAEALMGLLQSDLQLSVRVLHRDLGRE</sequence>
<accession>B8ZUN6</accession>
<comment type="function">
    <text evidence="1">Displays ATPase and GTPase activities.</text>
</comment>
<comment type="similarity">
    <text evidence="1">Belongs to the RapZ-like family.</text>
</comment>
<protein>
    <recommendedName>
        <fullName evidence="1">Nucleotide-binding protein MLBr00563</fullName>
    </recommendedName>
</protein>
<reference key="1">
    <citation type="journal article" date="2009" name="Nat. Genet.">
        <title>Comparative genomic and phylogeographic analysis of Mycobacterium leprae.</title>
        <authorList>
            <person name="Monot M."/>
            <person name="Honore N."/>
            <person name="Garnier T."/>
            <person name="Zidane N."/>
            <person name="Sherafi D."/>
            <person name="Paniz-Mondolfi A."/>
            <person name="Matsuoka M."/>
            <person name="Taylor G.M."/>
            <person name="Donoghue H.D."/>
            <person name="Bouwman A."/>
            <person name="Mays S."/>
            <person name="Watson C."/>
            <person name="Lockwood D."/>
            <person name="Khamispour A."/>
            <person name="Dowlati Y."/>
            <person name="Jianping S."/>
            <person name="Rea T.H."/>
            <person name="Vera-Cabrera L."/>
            <person name="Stefani M.M."/>
            <person name="Banu S."/>
            <person name="Macdonald M."/>
            <person name="Sapkota B.R."/>
            <person name="Spencer J.S."/>
            <person name="Thomas J."/>
            <person name="Harshman K."/>
            <person name="Singh P."/>
            <person name="Busso P."/>
            <person name="Gattiker A."/>
            <person name="Rougemont J."/>
            <person name="Brennan P.J."/>
            <person name="Cole S.T."/>
        </authorList>
    </citation>
    <scope>NUCLEOTIDE SEQUENCE [LARGE SCALE GENOMIC DNA]</scope>
    <source>
        <strain>Br4923</strain>
    </source>
</reference>
<organism>
    <name type="scientific">Mycobacterium leprae (strain Br4923)</name>
    <dbReference type="NCBI Taxonomy" id="561304"/>
    <lineage>
        <taxon>Bacteria</taxon>
        <taxon>Bacillati</taxon>
        <taxon>Actinomycetota</taxon>
        <taxon>Actinomycetes</taxon>
        <taxon>Mycobacteriales</taxon>
        <taxon>Mycobacteriaceae</taxon>
        <taxon>Mycobacterium</taxon>
    </lineage>
</organism>
<evidence type="ECO:0000255" key="1">
    <source>
        <dbReference type="HAMAP-Rule" id="MF_00636"/>
    </source>
</evidence>
<dbReference type="EMBL" id="FM211192">
    <property type="protein sequence ID" value="CAR70656.1"/>
    <property type="molecule type" value="Genomic_DNA"/>
</dbReference>
<dbReference type="SMR" id="B8ZUN6"/>
<dbReference type="KEGG" id="mlb:MLBr00563"/>
<dbReference type="HOGENOM" id="CLU_059558_0_0_11"/>
<dbReference type="Proteomes" id="UP000006900">
    <property type="component" value="Chromosome"/>
</dbReference>
<dbReference type="GO" id="GO:0005524">
    <property type="term" value="F:ATP binding"/>
    <property type="evidence" value="ECO:0007669"/>
    <property type="project" value="UniProtKB-UniRule"/>
</dbReference>
<dbReference type="GO" id="GO:0005525">
    <property type="term" value="F:GTP binding"/>
    <property type="evidence" value="ECO:0007669"/>
    <property type="project" value="UniProtKB-UniRule"/>
</dbReference>
<dbReference type="HAMAP" id="MF_00636">
    <property type="entry name" value="RapZ_like"/>
    <property type="match status" value="1"/>
</dbReference>
<dbReference type="InterPro" id="IPR027417">
    <property type="entry name" value="P-loop_NTPase"/>
</dbReference>
<dbReference type="InterPro" id="IPR005337">
    <property type="entry name" value="RapZ-like"/>
</dbReference>
<dbReference type="InterPro" id="IPR053930">
    <property type="entry name" value="RapZ-like_N"/>
</dbReference>
<dbReference type="InterPro" id="IPR053931">
    <property type="entry name" value="RapZ_C"/>
</dbReference>
<dbReference type="NCBIfam" id="NF003828">
    <property type="entry name" value="PRK05416.1"/>
    <property type="match status" value="1"/>
</dbReference>
<dbReference type="PANTHER" id="PTHR30448">
    <property type="entry name" value="RNASE ADAPTER PROTEIN RAPZ"/>
    <property type="match status" value="1"/>
</dbReference>
<dbReference type="PANTHER" id="PTHR30448:SF0">
    <property type="entry name" value="RNASE ADAPTER PROTEIN RAPZ"/>
    <property type="match status" value="1"/>
</dbReference>
<dbReference type="Pfam" id="PF22740">
    <property type="entry name" value="PapZ_C"/>
    <property type="match status" value="1"/>
</dbReference>
<dbReference type="Pfam" id="PF03668">
    <property type="entry name" value="RapZ-like_N"/>
    <property type="match status" value="1"/>
</dbReference>
<dbReference type="PIRSF" id="PIRSF005052">
    <property type="entry name" value="P-loopkin"/>
    <property type="match status" value="1"/>
</dbReference>
<dbReference type="SUPFAM" id="SSF52540">
    <property type="entry name" value="P-loop containing nucleoside triphosphate hydrolases"/>
    <property type="match status" value="1"/>
</dbReference>
<gene>
    <name type="ordered locus">MLBr00563</name>
</gene>
<proteinExistence type="inferred from homology"/>
<keyword id="KW-0067">ATP-binding</keyword>
<keyword id="KW-0342">GTP-binding</keyword>
<keyword id="KW-0547">Nucleotide-binding</keyword>
<name>Y563_MYCLB</name>